<dbReference type="EMBL" id="AF260826">
    <property type="protein sequence ID" value="AAF78603.1"/>
    <property type="molecule type" value="Genomic_DNA"/>
</dbReference>
<dbReference type="RefSeq" id="NP_075459.1">
    <property type="nucleotide sequence ID" value="NC_002660.1"/>
</dbReference>
<dbReference type="SMR" id="Q9MFN9"/>
<dbReference type="GeneID" id="802590"/>
<dbReference type="CTD" id="4519"/>
<dbReference type="GO" id="GO:0005743">
    <property type="term" value="C:mitochondrial inner membrane"/>
    <property type="evidence" value="ECO:0007669"/>
    <property type="project" value="UniProtKB-SubCell"/>
</dbReference>
<dbReference type="GO" id="GO:0045275">
    <property type="term" value="C:respiratory chain complex III"/>
    <property type="evidence" value="ECO:0007669"/>
    <property type="project" value="InterPro"/>
</dbReference>
<dbReference type="GO" id="GO:0046872">
    <property type="term" value="F:metal ion binding"/>
    <property type="evidence" value="ECO:0007669"/>
    <property type="project" value="UniProtKB-KW"/>
</dbReference>
<dbReference type="GO" id="GO:0008121">
    <property type="term" value="F:ubiquinol-cytochrome-c reductase activity"/>
    <property type="evidence" value="ECO:0007669"/>
    <property type="project" value="InterPro"/>
</dbReference>
<dbReference type="GO" id="GO:0006122">
    <property type="term" value="P:mitochondrial electron transport, ubiquinol to cytochrome c"/>
    <property type="evidence" value="ECO:0007669"/>
    <property type="project" value="TreeGrafter"/>
</dbReference>
<dbReference type="CDD" id="cd00290">
    <property type="entry name" value="cytochrome_b_C"/>
    <property type="match status" value="1"/>
</dbReference>
<dbReference type="CDD" id="cd00284">
    <property type="entry name" value="Cytochrome_b_N"/>
    <property type="match status" value="1"/>
</dbReference>
<dbReference type="FunFam" id="1.20.810.10:FF:000002">
    <property type="entry name" value="Cytochrome b"/>
    <property type="match status" value="1"/>
</dbReference>
<dbReference type="Gene3D" id="1.20.810.10">
    <property type="entry name" value="Cytochrome Bc1 Complex, Chain C"/>
    <property type="match status" value="1"/>
</dbReference>
<dbReference type="InterPro" id="IPR005798">
    <property type="entry name" value="Cyt_b/b6_C"/>
</dbReference>
<dbReference type="InterPro" id="IPR036150">
    <property type="entry name" value="Cyt_b/b6_C_sf"/>
</dbReference>
<dbReference type="InterPro" id="IPR005797">
    <property type="entry name" value="Cyt_b/b6_N"/>
</dbReference>
<dbReference type="InterPro" id="IPR027387">
    <property type="entry name" value="Cytb/b6-like_sf"/>
</dbReference>
<dbReference type="InterPro" id="IPR030689">
    <property type="entry name" value="Cytochrome_b"/>
</dbReference>
<dbReference type="InterPro" id="IPR048260">
    <property type="entry name" value="Cytochrome_b_C_euk/bac"/>
</dbReference>
<dbReference type="InterPro" id="IPR048259">
    <property type="entry name" value="Cytochrome_b_N_euk/bac"/>
</dbReference>
<dbReference type="InterPro" id="IPR016174">
    <property type="entry name" value="Di-haem_cyt_TM"/>
</dbReference>
<dbReference type="PANTHER" id="PTHR19271">
    <property type="entry name" value="CYTOCHROME B"/>
    <property type="match status" value="1"/>
</dbReference>
<dbReference type="PANTHER" id="PTHR19271:SF16">
    <property type="entry name" value="CYTOCHROME B"/>
    <property type="match status" value="1"/>
</dbReference>
<dbReference type="Pfam" id="PF00032">
    <property type="entry name" value="Cytochrom_B_C"/>
    <property type="match status" value="1"/>
</dbReference>
<dbReference type="Pfam" id="PF00033">
    <property type="entry name" value="Cytochrome_B"/>
    <property type="match status" value="1"/>
</dbReference>
<dbReference type="PIRSF" id="PIRSF038885">
    <property type="entry name" value="COB"/>
    <property type="match status" value="1"/>
</dbReference>
<dbReference type="SUPFAM" id="SSF81648">
    <property type="entry name" value="a domain/subunit of cytochrome bc1 complex (Ubiquinol-cytochrome c reductase)"/>
    <property type="match status" value="1"/>
</dbReference>
<dbReference type="SUPFAM" id="SSF81342">
    <property type="entry name" value="Transmembrane di-heme cytochromes"/>
    <property type="match status" value="1"/>
</dbReference>
<dbReference type="PROSITE" id="PS51003">
    <property type="entry name" value="CYTB_CTER"/>
    <property type="match status" value="1"/>
</dbReference>
<dbReference type="PROSITE" id="PS51002">
    <property type="entry name" value="CYTB_NTER"/>
    <property type="match status" value="1"/>
</dbReference>
<organism>
    <name type="scientific">Cochliomyia hominivorax</name>
    <name type="common">Primary screw-worm</name>
    <name type="synonym">Lucilia hominivorax</name>
    <dbReference type="NCBI Taxonomy" id="115425"/>
    <lineage>
        <taxon>Eukaryota</taxon>
        <taxon>Metazoa</taxon>
        <taxon>Ecdysozoa</taxon>
        <taxon>Arthropoda</taxon>
        <taxon>Hexapoda</taxon>
        <taxon>Insecta</taxon>
        <taxon>Pterygota</taxon>
        <taxon>Neoptera</taxon>
        <taxon>Endopterygota</taxon>
        <taxon>Diptera</taxon>
        <taxon>Brachycera</taxon>
        <taxon>Muscomorpha</taxon>
        <taxon>Oestroidea</taxon>
        <taxon>Calliphoridae</taxon>
        <taxon>Chrysomyinae</taxon>
        <taxon>Cochliomyia</taxon>
    </lineage>
</organism>
<comment type="function">
    <text evidence="2">Component of the ubiquinol-cytochrome c reductase complex (complex III or cytochrome b-c1 complex) that is part of the mitochondrial respiratory chain. The b-c1 complex mediates electron transfer from ubiquinol to cytochrome c. Contributes to the generation of a proton gradient across the mitochondrial membrane that is then used for ATP synthesis.</text>
</comment>
<comment type="cofactor">
    <cofactor evidence="2">
        <name>heme b</name>
        <dbReference type="ChEBI" id="CHEBI:60344"/>
    </cofactor>
    <text evidence="2">Binds 2 heme b groups non-covalently.</text>
</comment>
<comment type="subunit">
    <text evidence="2">The main subunits of complex b-c1 are: cytochrome b, cytochrome c1 and the Rieske protein.</text>
</comment>
<comment type="subcellular location">
    <subcellularLocation>
        <location evidence="3">Mitochondrion inner membrane</location>
        <topology evidence="3">Multi-pass membrane protein</topology>
    </subcellularLocation>
</comment>
<comment type="miscellaneous">
    <text evidence="1">Heme 1 (or BL or b562) is low-potential and absorbs at about 562 nm, and heme 2 (or BH or b566) is high-potential and absorbs at about 566 nm.</text>
</comment>
<comment type="similarity">
    <text evidence="4 5">Belongs to the cytochrome b family.</text>
</comment>
<comment type="caution">
    <text evidence="2">The full-length protein contains only eight transmembrane helices, not nine as predicted by bioinformatics tools.</text>
</comment>
<protein>
    <recommendedName>
        <fullName>Cytochrome b</fullName>
    </recommendedName>
    <alternativeName>
        <fullName>Complex III subunit 3</fullName>
    </alternativeName>
    <alternativeName>
        <fullName>Complex III subunit III</fullName>
    </alternativeName>
    <alternativeName>
        <fullName>Cytochrome b-c1 complex subunit 3</fullName>
    </alternativeName>
    <alternativeName>
        <fullName>Ubiquinol-cytochrome-c reductase complex cytochrome b subunit</fullName>
    </alternativeName>
</protein>
<sequence length="378" mass="43084">MNKPLRIKHPILSITNSALVDLPAPSNISAWWNFGSLLFLCLMIQILTGLFLAMHYTADISLAFNSVNHICRDVNYGWLLRTMHANGASFFFICIYLHVGRGIYYGSYLFTPTWLVGVIILFLVMGTAFMGYVLPWGQMSFWGATVITNLLSAIPYLGIDLVQWVWGGFAVDNATLTRFFTFHFILPFIVLAATLIHILFLHETGSNNPIGVNSNIDKIPFHPYFTFKDIVGFIMMTMILILLVLINPYLLGDPDNFIPANPLVTPVHIQPEWYFLFAYAILRSIPNKLGGVIALVLSIAILAILPFYHLSKFRGIQFYPINQILFWIMVVTVILLTWIGARPVEEPYVLVGQILTVIYFSYFMFNPLIIKWWDNLLN</sequence>
<evidence type="ECO:0000250" key="1"/>
<evidence type="ECO:0000250" key="2">
    <source>
        <dbReference type="UniProtKB" id="P00157"/>
    </source>
</evidence>
<evidence type="ECO:0000250" key="3">
    <source>
        <dbReference type="UniProtKB" id="P00163"/>
    </source>
</evidence>
<evidence type="ECO:0000255" key="4">
    <source>
        <dbReference type="PROSITE-ProRule" id="PRU00967"/>
    </source>
</evidence>
<evidence type="ECO:0000255" key="5">
    <source>
        <dbReference type="PROSITE-ProRule" id="PRU00968"/>
    </source>
</evidence>
<gene>
    <name type="primary">MT-CYB</name>
    <name type="synonym">COB</name>
    <name type="synonym">CYTB</name>
    <name type="synonym">MTCYB</name>
</gene>
<feature type="chain" id="PRO_0000060799" description="Cytochrome b">
    <location>
        <begin position="1"/>
        <end position="378"/>
    </location>
</feature>
<feature type="transmembrane region" description="Helical" evidence="2">
    <location>
        <begin position="34"/>
        <end position="54"/>
    </location>
</feature>
<feature type="transmembrane region" description="Helical" evidence="2">
    <location>
        <begin position="78"/>
        <end position="99"/>
    </location>
</feature>
<feature type="transmembrane region" description="Helical" evidence="2">
    <location>
        <begin position="114"/>
        <end position="134"/>
    </location>
</feature>
<feature type="transmembrane region" description="Helical" evidence="2">
    <location>
        <begin position="179"/>
        <end position="199"/>
    </location>
</feature>
<feature type="transmembrane region" description="Helical" evidence="2">
    <location>
        <begin position="227"/>
        <end position="247"/>
    </location>
</feature>
<feature type="transmembrane region" description="Helical" evidence="2">
    <location>
        <begin position="289"/>
        <end position="309"/>
    </location>
</feature>
<feature type="transmembrane region" description="Helical" evidence="2">
    <location>
        <begin position="321"/>
        <end position="341"/>
    </location>
</feature>
<feature type="transmembrane region" description="Helical" evidence="2">
    <location>
        <begin position="348"/>
        <end position="368"/>
    </location>
</feature>
<feature type="binding site" description="axial binding residue" evidence="2">
    <location>
        <position position="84"/>
    </location>
    <ligand>
        <name>heme b</name>
        <dbReference type="ChEBI" id="CHEBI:60344"/>
        <label>b562</label>
    </ligand>
    <ligandPart>
        <name>Fe</name>
        <dbReference type="ChEBI" id="CHEBI:18248"/>
    </ligandPart>
</feature>
<feature type="binding site" description="axial binding residue" evidence="2">
    <location>
        <position position="98"/>
    </location>
    <ligand>
        <name>heme b</name>
        <dbReference type="ChEBI" id="CHEBI:60344"/>
        <label>b566</label>
    </ligand>
    <ligandPart>
        <name>Fe</name>
        <dbReference type="ChEBI" id="CHEBI:18248"/>
    </ligandPart>
</feature>
<feature type="binding site" description="axial binding residue" evidence="2">
    <location>
        <position position="183"/>
    </location>
    <ligand>
        <name>heme b</name>
        <dbReference type="ChEBI" id="CHEBI:60344"/>
        <label>b562</label>
    </ligand>
    <ligandPart>
        <name>Fe</name>
        <dbReference type="ChEBI" id="CHEBI:18248"/>
    </ligandPart>
</feature>
<feature type="binding site" description="axial binding residue" evidence="2">
    <location>
        <position position="197"/>
    </location>
    <ligand>
        <name>heme b</name>
        <dbReference type="ChEBI" id="CHEBI:60344"/>
        <label>b566</label>
    </ligand>
    <ligandPart>
        <name>Fe</name>
        <dbReference type="ChEBI" id="CHEBI:18248"/>
    </ligandPart>
</feature>
<feature type="binding site" evidence="2">
    <location>
        <position position="202"/>
    </location>
    <ligand>
        <name>a ubiquinone</name>
        <dbReference type="ChEBI" id="CHEBI:16389"/>
    </ligand>
</feature>
<name>CYB_COLHO</name>
<geneLocation type="mitochondrion"/>
<accession>Q9MFN9</accession>
<proteinExistence type="inferred from homology"/>
<reference key="1">
    <citation type="journal article" date="2000" name="Insect Mol. Biol.">
        <title>The mitochondrial genome of the primary screwworm fly Cochliomyia hominivorax (Diptera: Calliphoridae).</title>
        <authorList>
            <person name="Lessinger A.C."/>
            <person name="Martins Junqueira A.C."/>
            <person name="Lemos T.A."/>
            <person name="Kemper E.L."/>
            <person name="da Silva F.R."/>
            <person name="Vettore A.L."/>
            <person name="Arruda P."/>
            <person name="Azeredo-Espin A.M."/>
        </authorList>
    </citation>
    <scope>NUCLEOTIDE SEQUENCE [GENOMIC DNA]</scope>
</reference>
<keyword id="KW-0249">Electron transport</keyword>
<keyword id="KW-0349">Heme</keyword>
<keyword id="KW-0408">Iron</keyword>
<keyword id="KW-0472">Membrane</keyword>
<keyword id="KW-0479">Metal-binding</keyword>
<keyword id="KW-0496">Mitochondrion</keyword>
<keyword id="KW-0999">Mitochondrion inner membrane</keyword>
<keyword id="KW-0679">Respiratory chain</keyword>
<keyword id="KW-0812">Transmembrane</keyword>
<keyword id="KW-1133">Transmembrane helix</keyword>
<keyword id="KW-0813">Transport</keyword>
<keyword id="KW-0830">Ubiquinone</keyword>